<proteinExistence type="evidence at protein level"/>
<reference evidence="4" key="1">
    <citation type="journal article" date="2005" name="Peptides">
        <title>An antifungal protein from flageolet beans.</title>
        <authorList>
            <person name="Xia L."/>
            <person name="Ng T.B."/>
        </authorList>
    </citation>
    <scope>PROTEIN SEQUENCE</scope>
    <scope>FUNCTION</scope>
    <source>
        <strain evidence="2">cv. Flageolet</strain>
        <tissue evidence="2">Seed</tissue>
    </source>
</reference>
<protein>
    <recommendedName>
        <fullName>Antifungal lectin PVAP</fullName>
    </recommendedName>
</protein>
<sequence>SNDIYFNFQR</sequence>
<dbReference type="GO" id="GO:0030246">
    <property type="term" value="F:carbohydrate binding"/>
    <property type="evidence" value="ECO:0007669"/>
    <property type="project" value="UniProtKB-KW"/>
</dbReference>
<dbReference type="GO" id="GO:0050832">
    <property type="term" value="P:defense response to fungus"/>
    <property type="evidence" value="ECO:0000314"/>
    <property type="project" value="UniProtKB"/>
</dbReference>
<dbReference type="GO" id="GO:0031640">
    <property type="term" value="P:killing of cells of another organism"/>
    <property type="evidence" value="ECO:0007669"/>
    <property type="project" value="UniProtKB-KW"/>
</dbReference>
<feature type="chain" id="PRO_0000245328" description="Antifungal lectin PVAP">
    <location>
        <begin position="1"/>
        <end position="10" status="greater than"/>
    </location>
</feature>
<feature type="non-terminal residue" evidence="3">
    <location>
        <position position="10"/>
    </location>
</feature>
<name>PVAP_PHAVU</name>
<comment type="function">
    <text evidence="2">Has strong antifungal activity against M.arachidicola with an IC(50) value of 9.8 uM but lacks antifungal activity against F.oxysporum and B.cinera. Has hemagglutinating activity towards rabbit erythrocytes. Has antiproliferative activity towards L1210 tumor cell line with an IC(50) of 3.6 uM. Lacks mitogenic towards murine splenocytes and does not inhibit HIV-1 reverse transcriptase.</text>
</comment>
<comment type="miscellaneous">
    <text evidence="2">Antifungal, antiproliferative and hemagglutinating activity is abolished by incubation at 100 degrees Celsius for 15 minutes. Antifungal activity is abolished by incubation with trypsin at 37 degrees Celsius for 30 minutes.</text>
</comment>
<comment type="similarity">
    <text evidence="1">Belongs to the leguminous lectin family.</text>
</comment>
<accession>P84869</accession>
<keyword id="KW-0929">Antimicrobial</keyword>
<keyword id="KW-0903">Direct protein sequencing</keyword>
<keyword id="KW-0295">Fungicide</keyword>
<keyword id="KW-0348">Hemagglutinin</keyword>
<keyword id="KW-0430">Lectin</keyword>
<keyword id="KW-0611">Plant defense</keyword>
<evidence type="ECO:0000255" key="1"/>
<evidence type="ECO:0000269" key="2">
    <source>
    </source>
</evidence>
<evidence type="ECO:0000303" key="3">
    <source>
    </source>
</evidence>
<evidence type="ECO:0000305" key="4"/>
<organism>
    <name type="scientific">Phaseolus vulgaris</name>
    <name type="common">Kidney bean</name>
    <name type="synonym">French bean</name>
    <dbReference type="NCBI Taxonomy" id="3885"/>
    <lineage>
        <taxon>Eukaryota</taxon>
        <taxon>Viridiplantae</taxon>
        <taxon>Streptophyta</taxon>
        <taxon>Embryophyta</taxon>
        <taxon>Tracheophyta</taxon>
        <taxon>Spermatophyta</taxon>
        <taxon>Magnoliopsida</taxon>
        <taxon>eudicotyledons</taxon>
        <taxon>Gunneridae</taxon>
        <taxon>Pentapetalae</taxon>
        <taxon>rosids</taxon>
        <taxon>fabids</taxon>
        <taxon>Fabales</taxon>
        <taxon>Fabaceae</taxon>
        <taxon>Papilionoideae</taxon>
        <taxon>50 kb inversion clade</taxon>
        <taxon>NPAAA clade</taxon>
        <taxon>indigoferoid/millettioid clade</taxon>
        <taxon>Phaseoleae</taxon>
        <taxon>Phaseolus</taxon>
    </lineage>
</organism>